<reference key="1">
    <citation type="journal article" date="1996" name="Genomics">
        <title>Identification of new members of the Gas2 and Ras families in the 22q12 chromosome region.</title>
        <authorList>
            <person name="Zucman-Rossi J."/>
            <person name="Legoix P."/>
            <person name="Thomas G."/>
        </authorList>
    </citation>
    <scope>NUCLEOTIDE SEQUENCE [MRNA] (ISOFORM 1)</scope>
    <scope>TISSUE SPECIFICITY</scope>
    <source>
        <tissue>Brain</tissue>
    </source>
</reference>
<reference key="2">
    <citation type="journal article" date="1999" name="Nature">
        <title>The DNA sequence of human chromosome 22.</title>
        <authorList>
            <person name="Dunham I."/>
            <person name="Hunt A.R."/>
            <person name="Collins J.E."/>
            <person name="Bruskiewich R."/>
            <person name="Beare D.M."/>
            <person name="Clamp M."/>
            <person name="Smink L.J."/>
            <person name="Ainscough R."/>
            <person name="Almeida J.P."/>
            <person name="Babbage A.K."/>
            <person name="Bagguley C."/>
            <person name="Bailey J."/>
            <person name="Barlow K.F."/>
            <person name="Bates K.N."/>
            <person name="Beasley O.P."/>
            <person name="Bird C.P."/>
            <person name="Blakey S.E."/>
            <person name="Bridgeman A.M."/>
            <person name="Buck D."/>
            <person name="Burgess J."/>
            <person name="Burrill W.D."/>
            <person name="Burton J."/>
            <person name="Carder C."/>
            <person name="Carter N.P."/>
            <person name="Chen Y."/>
            <person name="Clark G."/>
            <person name="Clegg S.M."/>
            <person name="Cobley V.E."/>
            <person name="Cole C.G."/>
            <person name="Collier R.E."/>
            <person name="Connor R."/>
            <person name="Conroy D."/>
            <person name="Corby N.R."/>
            <person name="Coville G.J."/>
            <person name="Cox A.V."/>
            <person name="Davis J."/>
            <person name="Dawson E."/>
            <person name="Dhami P.D."/>
            <person name="Dockree C."/>
            <person name="Dodsworth S.J."/>
            <person name="Durbin R.M."/>
            <person name="Ellington A.G."/>
            <person name="Evans K.L."/>
            <person name="Fey J.M."/>
            <person name="Fleming K."/>
            <person name="French L."/>
            <person name="Garner A.A."/>
            <person name="Gilbert J.G.R."/>
            <person name="Goward M.E."/>
            <person name="Grafham D.V."/>
            <person name="Griffiths M.N.D."/>
            <person name="Hall C."/>
            <person name="Hall R.E."/>
            <person name="Hall-Tamlyn G."/>
            <person name="Heathcott R.W."/>
            <person name="Ho S."/>
            <person name="Holmes S."/>
            <person name="Hunt S.E."/>
            <person name="Jones M.C."/>
            <person name="Kershaw J."/>
            <person name="Kimberley A.M."/>
            <person name="King A."/>
            <person name="Laird G.K."/>
            <person name="Langford C.F."/>
            <person name="Leversha M.A."/>
            <person name="Lloyd C."/>
            <person name="Lloyd D.M."/>
            <person name="Martyn I.D."/>
            <person name="Mashreghi-Mohammadi M."/>
            <person name="Matthews L.H."/>
            <person name="Mccann O.T."/>
            <person name="Mcclay J."/>
            <person name="Mclaren S."/>
            <person name="McMurray A.A."/>
            <person name="Milne S.A."/>
            <person name="Mortimore B.J."/>
            <person name="Odell C.N."/>
            <person name="Pavitt R."/>
            <person name="Pearce A.V."/>
            <person name="Pearson D."/>
            <person name="Phillimore B.J.C.T."/>
            <person name="Phillips S.H."/>
            <person name="Plumb R.W."/>
            <person name="Ramsay H."/>
            <person name="Ramsey Y."/>
            <person name="Rogers L."/>
            <person name="Ross M.T."/>
            <person name="Scott C.E."/>
            <person name="Sehra H.K."/>
            <person name="Skuce C.D."/>
            <person name="Smalley S."/>
            <person name="Smith M.L."/>
            <person name="Soderlund C."/>
            <person name="Spragon L."/>
            <person name="Steward C.A."/>
            <person name="Sulston J.E."/>
            <person name="Swann R.M."/>
            <person name="Vaudin M."/>
            <person name="Wall M."/>
            <person name="Wallis J.M."/>
            <person name="Whiteley M.N."/>
            <person name="Willey D.L."/>
            <person name="Williams L."/>
            <person name="Williams S.A."/>
            <person name="Williamson H."/>
            <person name="Wilmer T.E."/>
            <person name="Wilming L."/>
            <person name="Wright C.L."/>
            <person name="Hubbard T."/>
            <person name="Bentley D.R."/>
            <person name="Beck S."/>
            <person name="Rogers J."/>
            <person name="Shimizu N."/>
            <person name="Minoshima S."/>
            <person name="Kawasaki K."/>
            <person name="Sasaki T."/>
            <person name="Asakawa S."/>
            <person name="Kudoh J."/>
            <person name="Shintani A."/>
            <person name="Shibuya K."/>
            <person name="Yoshizaki Y."/>
            <person name="Aoki N."/>
            <person name="Mitsuyama S."/>
            <person name="Roe B.A."/>
            <person name="Chen F."/>
            <person name="Chu L."/>
            <person name="Crabtree J."/>
            <person name="Deschamps S."/>
            <person name="Do A."/>
            <person name="Do T."/>
            <person name="Dorman A."/>
            <person name="Fang F."/>
            <person name="Fu Y."/>
            <person name="Hu P."/>
            <person name="Hua A."/>
            <person name="Kenton S."/>
            <person name="Lai H."/>
            <person name="Lao H.I."/>
            <person name="Lewis J."/>
            <person name="Lewis S."/>
            <person name="Lin S.-P."/>
            <person name="Loh P."/>
            <person name="Malaj E."/>
            <person name="Nguyen T."/>
            <person name="Pan H."/>
            <person name="Phan S."/>
            <person name="Qi S."/>
            <person name="Qian Y."/>
            <person name="Ray L."/>
            <person name="Ren Q."/>
            <person name="Shaull S."/>
            <person name="Sloan D."/>
            <person name="Song L."/>
            <person name="Wang Q."/>
            <person name="Wang Y."/>
            <person name="Wang Z."/>
            <person name="White J."/>
            <person name="Willingham D."/>
            <person name="Wu H."/>
            <person name="Yao Z."/>
            <person name="Zhan M."/>
            <person name="Zhang G."/>
            <person name="Chissoe S."/>
            <person name="Murray J."/>
            <person name="Miller N."/>
            <person name="Minx P."/>
            <person name="Fulton R."/>
            <person name="Johnson D."/>
            <person name="Bemis G."/>
            <person name="Bentley D."/>
            <person name="Bradshaw H."/>
            <person name="Bourne S."/>
            <person name="Cordes M."/>
            <person name="Du Z."/>
            <person name="Fulton L."/>
            <person name="Goela D."/>
            <person name="Graves T."/>
            <person name="Hawkins J."/>
            <person name="Hinds K."/>
            <person name="Kemp K."/>
            <person name="Latreille P."/>
            <person name="Layman D."/>
            <person name="Ozersky P."/>
            <person name="Rohlfing T."/>
            <person name="Scheet P."/>
            <person name="Walker C."/>
            <person name="Wamsley A."/>
            <person name="Wohldmann P."/>
            <person name="Pepin K."/>
            <person name="Nelson J."/>
            <person name="Korf I."/>
            <person name="Bedell J.A."/>
            <person name="Hillier L.W."/>
            <person name="Mardis E."/>
            <person name="Waterston R."/>
            <person name="Wilson R."/>
            <person name="Emanuel B.S."/>
            <person name="Shaikh T."/>
            <person name="Kurahashi H."/>
            <person name="Saitta S."/>
            <person name="Budarf M.L."/>
            <person name="McDermid H.E."/>
            <person name="Johnson A."/>
            <person name="Wong A.C.C."/>
            <person name="Morrow B.E."/>
            <person name="Edelmann L."/>
            <person name="Kim U.J."/>
            <person name="Shizuya H."/>
            <person name="Simon M.I."/>
            <person name="Dumanski J.P."/>
            <person name="Peyrard M."/>
            <person name="Kedra D."/>
            <person name="Seroussi E."/>
            <person name="Fransson I."/>
            <person name="Tapia I."/>
            <person name="Bruder C.E."/>
            <person name="O'Brien K.P."/>
            <person name="Wilkinson P."/>
            <person name="Bodenteich A."/>
            <person name="Hartman K."/>
            <person name="Hu X."/>
            <person name="Khan A.S."/>
            <person name="Lane L."/>
            <person name="Tilahun Y."/>
            <person name="Wright H."/>
        </authorList>
    </citation>
    <scope>NUCLEOTIDE SEQUENCE [LARGE SCALE GENOMIC DNA]</scope>
</reference>
<reference key="3">
    <citation type="journal article" date="2004" name="Genome Res.">
        <title>The status, quality, and expansion of the NIH full-length cDNA project: the Mammalian Gene Collection (MGC).</title>
        <authorList>
            <consortium name="The MGC Project Team"/>
        </authorList>
    </citation>
    <scope>NUCLEOTIDE SEQUENCE [LARGE SCALE MRNA] (ISOFORMS 1 AND 2)</scope>
    <source>
        <tissue>Brain</tissue>
    </source>
</reference>
<reference key="4">
    <citation type="journal article" date="2005" name="Cancer Res.">
        <title>RRP22 is a farnesylated, nucleolar, Ras-related protein with tumor suppressor potential.</title>
        <authorList>
            <person name="Elam C."/>
            <person name="Hesson L."/>
            <person name="Vos M.D."/>
            <person name="Eckfeld K."/>
            <person name="Ellis C.A."/>
            <person name="Bell A."/>
            <person name="Krex D."/>
            <person name="Birrer M.J."/>
            <person name="Latif F."/>
            <person name="Clark G.J."/>
        </authorList>
    </citation>
    <scope>FUNCTION</scope>
    <scope>SUBCELLULAR LOCATION</scope>
    <scope>ISOPRENYLATION AT CYS-200</scope>
</reference>
<accession>Q92737</accession>
<accession>Q49AU5</accession>
<accession>Q6PI03</accession>
<proteinExistence type="evidence at protein level"/>
<sequence>MGGSLRVAVLGAPGVGKTAIIRQFLFGDYPERHRPTDGPRLYRPAVLLDGAVYDLSIRDGDVAGPGSSPGGPEEWPDAKDWSLQDTDAFVLVYDICSPDSFDYVKALRQRIAETRPAGAPEAPILVVGNKRDRQRLRFGPRRALAALVRRGWRCGYLECSAKYNWHVLRLFRELLRCALVRARPAHPALRLQGALHPARCSLM</sequence>
<name>RSLAA_HUMAN</name>
<protein>
    <recommendedName>
        <fullName>Ras-like protein family member 10A</fullName>
        <ecNumber evidence="2">3.6.5.2</ecNumber>
    </recommendedName>
    <alternativeName>
        <fullName>Ras-like protein RRP22</fullName>
    </alternativeName>
    <alternativeName>
        <fullName>Ras-related protein on chromosome 22</fullName>
    </alternativeName>
</protein>
<organism>
    <name type="scientific">Homo sapiens</name>
    <name type="common">Human</name>
    <dbReference type="NCBI Taxonomy" id="9606"/>
    <lineage>
        <taxon>Eukaryota</taxon>
        <taxon>Metazoa</taxon>
        <taxon>Chordata</taxon>
        <taxon>Craniata</taxon>
        <taxon>Vertebrata</taxon>
        <taxon>Euteleostomi</taxon>
        <taxon>Mammalia</taxon>
        <taxon>Eutheria</taxon>
        <taxon>Euarchontoglires</taxon>
        <taxon>Primates</taxon>
        <taxon>Haplorrhini</taxon>
        <taxon>Catarrhini</taxon>
        <taxon>Hominidae</taxon>
        <taxon>Homo</taxon>
    </lineage>
</organism>
<evidence type="ECO:0000250" key="1"/>
<evidence type="ECO:0000250" key="2">
    <source>
        <dbReference type="UniProtKB" id="P01116"/>
    </source>
</evidence>
<evidence type="ECO:0000269" key="3">
    <source>
    </source>
</evidence>
<evidence type="ECO:0000269" key="4">
    <source>
    </source>
</evidence>
<evidence type="ECO:0000303" key="5">
    <source>
    </source>
</evidence>
<evidence type="ECO:0000305" key="6"/>
<comment type="function">
    <text evidence="3">Potent inhibitor of cellular proliferation.</text>
</comment>
<comment type="catalytic activity">
    <reaction evidence="2">
        <text>GTP + H2O = GDP + phosphate + H(+)</text>
        <dbReference type="Rhea" id="RHEA:19669"/>
        <dbReference type="ChEBI" id="CHEBI:15377"/>
        <dbReference type="ChEBI" id="CHEBI:15378"/>
        <dbReference type="ChEBI" id="CHEBI:37565"/>
        <dbReference type="ChEBI" id="CHEBI:43474"/>
        <dbReference type="ChEBI" id="CHEBI:58189"/>
        <dbReference type="EC" id="3.6.5.2"/>
    </reaction>
</comment>
<comment type="subcellular location">
    <subcellularLocation>
        <location evidence="6">Cell membrane</location>
        <topology evidence="6">Lipid-anchor</topology>
        <orientation evidence="6">Cytoplasmic side</orientation>
    </subcellularLocation>
    <subcellularLocation>
        <location evidence="3">Nucleus</location>
        <location evidence="3">Nucleolus</location>
    </subcellularLocation>
    <text>May cycle in and out of the nucleolus in a GTP-dependent manner.</text>
</comment>
<comment type="alternative products">
    <event type="alternative splicing"/>
    <isoform>
        <id>Q92737-1</id>
        <name>1</name>
        <sequence type="displayed"/>
    </isoform>
    <isoform>
        <id>Q92737-2</id>
        <name>2</name>
        <name>B</name>
        <sequence type="described" ref="VSP_013372"/>
    </isoform>
</comment>
<comment type="tissue specificity">
    <text evidence="4">Expression appears to be strictly limited to the central nervous system.</text>
</comment>
<comment type="PTM">
    <text evidence="3">Isoprenylation is essential for nucleolar localization, and the proliferation-inhibiting activity of RASL10A.</text>
</comment>
<comment type="similarity">
    <text evidence="6">Belongs to the small GTPase superfamily. Ras family.</text>
</comment>
<dbReference type="EC" id="3.6.5.2" evidence="2"/>
<dbReference type="EMBL" id="Y07847">
    <property type="protein sequence ID" value="CAA69175.1"/>
    <property type="molecule type" value="mRNA"/>
</dbReference>
<dbReference type="EMBL" id="AC002059">
    <property type="status" value="NOT_ANNOTATED_CDS"/>
    <property type="molecule type" value="Genomic_DNA"/>
</dbReference>
<dbReference type="EMBL" id="BC022473">
    <property type="protein sequence ID" value="AAH22473.1"/>
    <property type="molecule type" value="mRNA"/>
</dbReference>
<dbReference type="EMBL" id="BC040434">
    <property type="protein sequence ID" value="AAH40434.1"/>
    <property type="molecule type" value="mRNA"/>
</dbReference>
<dbReference type="EMBL" id="BC050739">
    <property type="protein sequence ID" value="AAH50739.1"/>
    <property type="molecule type" value="mRNA"/>
</dbReference>
<dbReference type="EMBL" id="BC058077">
    <property type="protein sequence ID" value="AAH58077.1"/>
    <property type="molecule type" value="mRNA"/>
</dbReference>
<dbReference type="CCDS" id="CCDS13854.1">
    <molecule id="Q92737-1"/>
</dbReference>
<dbReference type="RefSeq" id="NP_006468.1">
    <molecule id="Q92737-1"/>
    <property type="nucleotide sequence ID" value="NM_006477.5"/>
</dbReference>
<dbReference type="SMR" id="Q92737"/>
<dbReference type="BioGRID" id="115877">
    <property type="interactions" value="13"/>
</dbReference>
<dbReference type="FunCoup" id="Q92737">
    <property type="interactions" value="219"/>
</dbReference>
<dbReference type="IntAct" id="Q92737">
    <property type="interactions" value="4"/>
</dbReference>
<dbReference type="STRING" id="9606.ENSP00000216101"/>
<dbReference type="BioMuta" id="RASL10A"/>
<dbReference type="DMDM" id="3024572"/>
<dbReference type="MassIVE" id="Q92737"/>
<dbReference type="PaxDb" id="9606-ENSP00000216101"/>
<dbReference type="PeptideAtlas" id="Q92737"/>
<dbReference type="Antibodypedia" id="24486">
    <property type="antibodies" value="112 antibodies from 23 providers"/>
</dbReference>
<dbReference type="DNASU" id="10633"/>
<dbReference type="Ensembl" id="ENST00000216101.7">
    <molecule id="Q92737-1"/>
    <property type="protein sequence ID" value="ENSP00000216101.6"/>
    <property type="gene ID" value="ENSG00000100276.10"/>
</dbReference>
<dbReference type="Ensembl" id="ENST00000401450.3">
    <molecule id="Q92737-2"/>
    <property type="protein sequence ID" value="ENSP00000386095.3"/>
    <property type="gene ID" value="ENSG00000100276.10"/>
</dbReference>
<dbReference type="GeneID" id="10633"/>
<dbReference type="KEGG" id="hsa:10633"/>
<dbReference type="MANE-Select" id="ENST00000216101.7">
    <property type="protein sequence ID" value="ENSP00000216101.6"/>
    <property type="RefSeq nucleotide sequence ID" value="NM_006477.5"/>
    <property type="RefSeq protein sequence ID" value="NP_006468.1"/>
</dbReference>
<dbReference type="UCSC" id="uc003aff.4">
    <molecule id="Q92737-1"/>
    <property type="organism name" value="human"/>
</dbReference>
<dbReference type="AGR" id="HGNC:16954"/>
<dbReference type="CTD" id="10633"/>
<dbReference type="DisGeNET" id="10633"/>
<dbReference type="GeneCards" id="RASL10A"/>
<dbReference type="HGNC" id="HGNC:16954">
    <property type="gene designation" value="RASL10A"/>
</dbReference>
<dbReference type="HPA" id="ENSG00000100276">
    <property type="expression patterns" value="Tissue enriched (brain)"/>
</dbReference>
<dbReference type="MIM" id="602220">
    <property type="type" value="gene"/>
</dbReference>
<dbReference type="neXtProt" id="NX_Q92737"/>
<dbReference type="OpenTargets" id="ENSG00000100276"/>
<dbReference type="PharmGKB" id="PA162400707"/>
<dbReference type="VEuPathDB" id="HostDB:ENSG00000100276"/>
<dbReference type="eggNOG" id="KOG0395">
    <property type="taxonomic scope" value="Eukaryota"/>
</dbReference>
<dbReference type="GeneTree" id="ENSGT00940000162366"/>
<dbReference type="HOGENOM" id="CLU_148762_0_0_1"/>
<dbReference type="InParanoid" id="Q92737"/>
<dbReference type="OMA" id="ALHRNRC"/>
<dbReference type="OrthoDB" id="299781at2759"/>
<dbReference type="PAN-GO" id="Q92737">
    <property type="GO annotations" value="0 GO annotations based on evolutionary models"/>
</dbReference>
<dbReference type="PhylomeDB" id="Q92737"/>
<dbReference type="TreeFam" id="TF325043"/>
<dbReference type="PathwayCommons" id="Q92737"/>
<dbReference type="SignaLink" id="Q92737"/>
<dbReference type="BioGRID-ORCS" id="10633">
    <property type="hits" value="33 hits in 1150 CRISPR screens"/>
</dbReference>
<dbReference type="CD-CODE" id="91857CE7">
    <property type="entry name" value="Nucleolus"/>
</dbReference>
<dbReference type="ChiTaRS" id="RASL10A">
    <property type="organism name" value="human"/>
</dbReference>
<dbReference type="GenomeRNAi" id="10633"/>
<dbReference type="Pharos" id="Q92737">
    <property type="development level" value="Tbio"/>
</dbReference>
<dbReference type="PRO" id="PR:Q92737"/>
<dbReference type="Proteomes" id="UP000005640">
    <property type="component" value="Chromosome 22"/>
</dbReference>
<dbReference type="RNAct" id="Q92737">
    <property type="molecule type" value="protein"/>
</dbReference>
<dbReference type="Bgee" id="ENSG00000100276">
    <property type="expression patterns" value="Expressed in amygdala and 115 other cell types or tissues"/>
</dbReference>
<dbReference type="ExpressionAtlas" id="Q92737">
    <property type="expression patterns" value="baseline and differential"/>
</dbReference>
<dbReference type="GO" id="GO:0005730">
    <property type="term" value="C:nucleolus"/>
    <property type="evidence" value="ECO:0007669"/>
    <property type="project" value="UniProtKB-SubCell"/>
</dbReference>
<dbReference type="GO" id="GO:0005886">
    <property type="term" value="C:plasma membrane"/>
    <property type="evidence" value="ECO:0007669"/>
    <property type="project" value="UniProtKB-SubCell"/>
</dbReference>
<dbReference type="GO" id="GO:0003925">
    <property type="term" value="F:G protein activity"/>
    <property type="evidence" value="ECO:0007669"/>
    <property type="project" value="UniProtKB-EC"/>
</dbReference>
<dbReference type="GO" id="GO:0005525">
    <property type="term" value="F:GTP binding"/>
    <property type="evidence" value="ECO:0007669"/>
    <property type="project" value="UniProtKB-KW"/>
</dbReference>
<dbReference type="GO" id="GO:0003924">
    <property type="term" value="F:GTPase activity"/>
    <property type="evidence" value="ECO:0000304"/>
    <property type="project" value="ProtInc"/>
</dbReference>
<dbReference type="GO" id="GO:0007264">
    <property type="term" value="P:small GTPase-mediated signal transduction"/>
    <property type="evidence" value="ECO:0000304"/>
    <property type="project" value="ProtInc"/>
</dbReference>
<dbReference type="FunFam" id="3.40.50.300:FF:000625">
    <property type="entry name" value="Ras-like protein family member 10B"/>
    <property type="match status" value="1"/>
</dbReference>
<dbReference type="Gene3D" id="3.40.50.300">
    <property type="entry name" value="P-loop containing nucleotide triphosphate hydrolases"/>
    <property type="match status" value="1"/>
</dbReference>
<dbReference type="InterPro" id="IPR027417">
    <property type="entry name" value="P-loop_NTPase"/>
</dbReference>
<dbReference type="InterPro" id="IPR052661">
    <property type="entry name" value="Ras-like_GTPase_Reg"/>
</dbReference>
<dbReference type="InterPro" id="IPR001806">
    <property type="entry name" value="Small_GTPase"/>
</dbReference>
<dbReference type="PANTHER" id="PTHR46350">
    <property type="entry name" value="RAS LIKE FAMILY 10 MEMBER B-RELATED"/>
    <property type="match status" value="1"/>
</dbReference>
<dbReference type="PANTHER" id="PTHR46350:SF3">
    <property type="entry name" value="RAS-LIKE PROTEIN FAMILY MEMBER 10A"/>
    <property type="match status" value="1"/>
</dbReference>
<dbReference type="Pfam" id="PF00071">
    <property type="entry name" value="Ras"/>
    <property type="match status" value="1"/>
</dbReference>
<dbReference type="PRINTS" id="PR00449">
    <property type="entry name" value="RASTRNSFRMNG"/>
</dbReference>
<dbReference type="SMART" id="SM00175">
    <property type="entry name" value="RAB"/>
    <property type="match status" value="1"/>
</dbReference>
<dbReference type="SMART" id="SM00173">
    <property type="entry name" value="RAS"/>
    <property type="match status" value="1"/>
</dbReference>
<dbReference type="SMART" id="SM00174">
    <property type="entry name" value="RHO"/>
    <property type="match status" value="1"/>
</dbReference>
<dbReference type="SUPFAM" id="SSF52540">
    <property type="entry name" value="P-loop containing nucleoside triphosphate hydrolases"/>
    <property type="match status" value="1"/>
</dbReference>
<feature type="chain" id="PRO_0000082706" description="Ras-like protein family member 10A">
    <location>
        <begin position="1"/>
        <end position="200"/>
    </location>
</feature>
<feature type="propeptide" id="PRO_0000281360" description="Removed in mature form" evidence="1">
    <location>
        <begin position="201"/>
        <end position="203"/>
    </location>
</feature>
<feature type="region of interest" description="Small GTPase-like">
    <location>
        <begin position="1"/>
        <end position="203"/>
    </location>
</feature>
<feature type="short sequence motif" description="Effector region" evidence="6">
    <location>
        <begin position="33"/>
        <end position="42"/>
    </location>
</feature>
<feature type="binding site" evidence="1">
    <location>
        <begin position="11"/>
        <end position="18"/>
    </location>
    <ligand>
        <name>GTP</name>
        <dbReference type="ChEBI" id="CHEBI:37565"/>
    </ligand>
</feature>
<feature type="binding site" evidence="1">
    <location>
        <begin position="59"/>
        <end position="62"/>
    </location>
    <ligand>
        <name>GTP</name>
        <dbReference type="ChEBI" id="CHEBI:37565"/>
    </ligand>
</feature>
<feature type="binding site" evidence="1">
    <location>
        <begin position="129"/>
        <end position="132"/>
    </location>
    <ligand>
        <name>GTP</name>
        <dbReference type="ChEBI" id="CHEBI:37565"/>
    </ligand>
</feature>
<feature type="modified residue" description="Cysteine methyl ester" evidence="1">
    <location>
        <position position="200"/>
    </location>
</feature>
<feature type="lipid moiety-binding region" description="S-farnesyl cysteine" evidence="3">
    <location>
        <position position="200"/>
    </location>
</feature>
<feature type="splice variant" id="VSP_013372" description="In isoform 2." evidence="5">
    <location>
        <begin position="116"/>
        <end position="203"/>
    </location>
</feature>
<feature type="sequence conflict" description="In Ref. 3; AAH22473." evidence="6" ref="3">
    <original>L</original>
    <variation>V</variation>
    <location>
        <position position="25"/>
    </location>
</feature>
<keyword id="KW-0025">Alternative splicing</keyword>
<keyword id="KW-1003">Cell membrane</keyword>
<keyword id="KW-0342">GTP-binding</keyword>
<keyword id="KW-0378">Hydrolase</keyword>
<keyword id="KW-0449">Lipoprotein</keyword>
<keyword id="KW-0472">Membrane</keyword>
<keyword id="KW-0488">Methylation</keyword>
<keyword id="KW-0547">Nucleotide-binding</keyword>
<keyword id="KW-0539">Nucleus</keyword>
<keyword id="KW-0636">Prenylation</keyword>
<keyword id="KW-1185">Reference proteome</keyword>
<keyword id="KW-0043">Tumor suppressor</keyword>
<gene>
    <name type="primary">RASL10A</name>
    <name type="synonym">RRP22</name>
</gene>